<evidence type="ECO:0000255" key="1">
    <source>
        <dbReference type="HAMAP-Rule" id="MF_00502"/>
    </source>
</evidence>
<evidence type="ECO:0000305" key="2"/>
<keyword id="KW-0687">Ribonucleoprotein</keyword>
<keyword id="KW-0689">Ribosomal protein</keyword>
<protein>
    <recommendedName>
        <fullName evidence="1">Large ribosomal subunit protein bL31B</fullName>
    </recommendedName>
    <alternativeName>
        <fullName evidence="2">50S ribosomal protein L31 type B</fullName>
    </alternativeName>
</protein>
<dbReference type="EMBL" id="CP000521">
    <property type="protein sequence ID" value="ABO10850.1"/>
    <property type="molecule type" value="Genomic_DNA"/>
</dbReference>
<dbReference type="RefSeq" id="WP_001224256.1">
    <property type="nucleotide sequence ID" value="NZ_CP053098.1"/>
</dbReference>
<dbReference type="SMR" id="A3M1Q6"/>
<dbReference type="KEGG" id="acb:A1S_0391"/>
<dbReference type="HOGENOM" id="CLU_114306_2_1_6"/>
<dbReference type="GO" id="GO:1990904">
    <property type="term" value="C:ribonucleoprotein complex"/>
    <property type="evidence" value="ECO:0007669"/>
    <property type="project" value="UniProtKB-KW"/>
</dbReference>
<dbReference type="GO" id="GO:0005840">
    <property type="term" value="C:ribosome"/>
    <property type="evidence" value="ECO:0007669"/>
    <property type="project" value="UniProtKB-KW"/>
</dbReference>
<dbReference type="GO" id="GO:0003735">
    <property type="term" value="F:structural constituent of ribosome"/>
    <property type="evidence" value="ECO:0007669"/>
    <property type="project" value="InterPro"/>
</dbReference>
<dbReference type="GO" id="GO:0006412">
    <property type="term" value="P:translation"/>
    <property type="evidence" value="ECO:0007669"/>
    <property type="project" value="UniProtKB-UniRule"/>
</dbReference>
<dbReference type="Gene3D" id="4.10.830.30">
    <property type="entry name" value="Ribosomal protein L31"/>
    <property type="match status" value="1"/>
</dbReference>
<dbReference type="HAMAP" id="MF_00502">
    <property type="entry name" value="Ribosomal_bL31_2"/>
    <property type="match status" value="1"/>
</dbReference>
<dbReference type="InterPro" id="IPR034704">
    <property type="entry name" value="Ribosomal_bL28/bL31-like_sf"/>
</dbReference>
<dbReference type="InterPro" id="IPR002150">
    <property type="entry name" value="Ribosomal_bL31"/>
</dbReference>
<dbReference type="InterPro" id="IPR027493">
    <property type="entry name" value="Ribosomal_bL31_B"/>
</dbReference>
<dbReference type="InterPro" id="IPR042105">
    <property type="entry name" value="Ribosomal_bL31_sf"/>
</dbReference>
<dbReference type="NCBIfam" id="TIGR00105">
    <property type="entry name" value="L31"/>
    <property type="match status" value="1"/>
</dbReference>
<dbReference type="NCBIfam" id="NF002462">
    <property type="entry name" value="PRK01678.1"/>
    <property type="match status" value="1"/>
</dbReference>
<dbReference type="PANTHER" id="PTHR33280">
    <property type="entry name" value="50S RIBOSOMAL PROTEIN L31, CHLOROPLASTIC"/>
    <property type="match status" value="1"/>
</dbReference>
<dbReference type="PANTHER" id="PTHR33280:SF1">
    <property type="entry name" value="LARGE RIBOSOMAL SUBUNIT PROTEIN BL31C"/>
    <property type="match status" value="1"/>
</dbReference>
<dbReference type="Pfam" id="PF01197">
    <property type="entry name" value="Ribosomal_L31"/>
    <property type="match status" value="1"/>
</dbReference>
<dbReference type="PRINTS" id="PR01249">
    <property type="entry name" value="RIBOSOMALL31"/>
</dbReference>
<dbReference type="SUPFAM" id="SSF143800">
    <property type="entry name" value="L28p-like"/>
    <property type="match status" value="1"/>
</dbReference>
<dbReference type="PROSITE" id="PS01143">
    <property type="entry name" value="RIBOSOMAL_L31"/>
    <property type="match status" value="1"/>
</dbReference>
<organism>
    <name type="scientific">Acinetobacter baumannii (strain ATCC 17978 / DSM 105126 / CIP 53.77 / LMG 1025 / NCDC KC755 / 5377)</name>
    <dbReference type="NCBI Taxonomy" id="400667"/>
    <lineage>
        <taxon>Bacteria</taxon>
        <taxon>Pseudomonadati</taxon>
        <taxon>Pseudomonadota</taxon>
        <taxon>Gammaproteobacteria</taxon>
        <taxon>Moraxellales</taxon>
        <taxon>Moraxellaceae</taxon>
        <taxon>Acinetobacter</taxon>
        <taxon>Acinetobacter calcoaceticus/baumannii complex</taxon>
    </lineage>
</organism>
<name>RL31B_ACIBT</name>
<proteinExistence type="inferred from homology"/>
<feature type="chain" id="PRO_1000014677" description="Large ribosomal subunit protein bL31B">
    <location>
        <begin position="1"/>
        <end position="84"/>
    </location>
</feature>
<accession>A3M1Q6</accession>
<gene>
    <name evidence="1" type="primary">rpmE2</name>
    <name type="ordered locus">A1S_0391</name>
</gene>
<comment type="subunit">
    <text evidence="1">Part of the 50S ribosomal subunit.</text>
</comment>
<comment type="similarity">
    <text evidence="1">Belongs to the bacterial ribosomal protein bL31 family. Type B subfamily.</text>
</comment>
<sequence>MRKDIHPAYQQVLFHDTNADVYFLIGSTIQTKQTKEYQGQVYPYVTLDISSASHPFYTGEVRQASNEGRVASFNKRFARFNRKS</sequence>
<reference key="1">
    <citation type="journal article" date="2007" name="Genes Dev.">
        <title>New insights into Acinetobacter baumannii pathogenesis revealed by high-density pyrosequencing and transposon mutagenesis.</title>
        <authorList>
            <person name="Smith M.G."/>
            <person name="Gianoulis T.A."/>
            <person name="Pukatzki S."/>
            <person name="Mekalanos J.J."/>
            <person name="Ornston L.N."/>
            <person name="Gerstein M."/>
            <person name="Snyder M."/>
        </authorList>
    </citation>
    <scope>NUCLEOTIDE SEQUENCE [LARGE SCALE GENOMIC DNA]</scope>
    <source>
        <strain>ATCC 17978 / DSM 105126 / CIP 53.77 / LMG 1025 / NCDC KC755 / 5377</strain>
    </source>
</reference>